<evidence type="ECO:0000250" key="1"/>
<evidence type="ECO:0000255" key="2"/>
<evidence type="ECO:0000305" key="3"/>
<feature type="chain" id="PRO_0000352516" description="Cytochrome P450 704C1">
    <location>
        <begin position="1"/>
        <end position="518"/>
    </location>
</feature>
<feature type="transmembrane region" description="Helical" evidence="2">
    <location>
        <begin position="5"/>
        <end position="25"/>
    </location>
</feature>
<feature type="transmembrane region" description="Helical" evidence="2">
    <location>
        <begin position="299"/>
        <end position="319"/>
    </location>
</feature>
<feature type="binding site" description="axial binding residue" evidence="1">
    <location>
        <position position="461"/>
    </location>
    <ligand>
        <name>heme</name>
        <dbReference type="ChEBI" id="CHEBI:30413"/>
    </ligand>
    <ligandPart>
        <name>Fe</name>
        <dbReference type="ChEBI" id="CHEBI:18248"/>
    </ligandPart>
</feature>
<organism>
    <name type="scientific">Pinus taeda</name>
    <name type="common">Loblolly pine</name>
    <dbReference type="NCBI Taxonomy" id="3352"/>
    <lineage>
        <taxon>Eukaryota</taxon>
        <taxon>Viridiplantae</taxon>
        <taxon>Streptophyta</taxon>
        <taxon>Embryophyta</taxon>
        <taxon>Tracheophyta</taxon>
        <taxon>Spermatophyta</taxon>
        <taxon>Pinopsida</taxon>
        <taxon>Pinidae</taxon>
        <taxon>Conifers I</taxon>
        <taxon>Pinales</taxon>
        <taxon>Pinaceae</taxon>
        <taxon>Pinus</taxon>
        <taxon>Pinus subgen. Pinus</taxon>
    </lineage>
</organism>
<keyword id="KW-0349">Heme</keyword>
<keyword id="KW-0408">Iron</keyword>
<keyword id="KW-0472">Membrane</keyword>
<keyword id="KW-0479">Metal-binding</keyword>
<keyword id="KW-0503">Monooxygenase</keyword>
<keyword id="KW-0560">Oxidoreductase</keyword>
<keyword id="KW-0812">Transmembrane</keyword>
<keyword id="KW-1133">Transmembrane helix</keyword>
<sequence length="518" mass="59259">MDVNILTMFVTVSALALACSLWIASYLRNWRKKGVYPPVVGTMLNHAINFERLHDYHTDQAQRYKTFRVVYPTCSYVFTTDPVNVEHILKTNFANYDKGTFNYDIMKDLLGDGIFNVDGDKWRQQRKLASSEFASKVLKDFSSGVFCNNAAKLANILAQAAKLNLSVEMQDLFMRSSLDSICKVVFGIDINSLSSSKAESGPEASFAKAFDVANAMVFHRHMVGSFWKVQRFFNVGSEAILRDNIKMVDDFLYKVIHFRRQEMFSAEKENVRPDILSRYIIISDKETDGKVSDKYLRDVILNFMVAARDTTAIALSWFIYMLCKHQHVQEKLLEEIISSTSVHEDQYSTECNDIASFAQSLTDEALGKMHYLHASLSETLRLYPALPVDGKYVVNEDTLPDGFKVKKGDSVNFLPYAMGRMSYLWGDDAKEFKPERWIQDGIFHPKSPFKFPAFQAGPRTCLGKDFAYLQMKIVAAVLVRFFKFEAVKTKEVRYRTMLTLHMNEDGLNVQVTPRLNSD</sequence>
<name>C04C1_PINTA</name>
<dbReference type="EC" id="1.14.-.-"/>
<dbReference type="EMBL" id="AY779540">
    <property type="protein sequence ID" value="AAX07434.1"/>
    <property type="molecule type" value="mRNA"/>
</dbReference>
<dbReference type="SMR" id="Q50EK3"/>
<dbReference type="OMA" id="WSDTLFK"/>
<dbReference type="BRENDA" id="1.14.14.145">
    <property type="organism ID" value="4861"/>
</dbReference>
<dbReference type="GO" id="GO:0016020">
    <property type="term" value="C:membrane"/>
    <property type="evidence" value="ECO:0007669"/>
    <property type="project" value="UniProtKB-SubCell"/>
</dbReference>
<dbReference type="GO" id="GO:0020037">
    <property type="term" value="F:heme binding"/>
    <property type="evidence" value="ECO:0007669"/>
    <property type="project" value="InterPro"/>
</dbReference>
<dbReference type="GO" id="GO:0005506">
    <property type="term" value="F:iron ion binding"/>
    <property type="evidence" value="ECO:0007669"/>
    <property type="project" value="InterPro"/>
</dbReference>
<dbReference type="GO" id="GO:0004497">
    <property type="term" value="F:monooxygenase activity"/>
    <property type="evidence" value="ECO:0007669"/>
    <property type="project" value="UniProtKB-KW"/>
</dbReference>
<dbReference type="GO" id="GO:0016705">
    <property type="term" value="F:oxidoreductase activity, acting on paired donors, with incorporation or reduction of molecular oxygen"/>
    <property type="evidence" value="ECO:0007669"/>
    <property type="project" value="InterPro"/>
</dbReference>
<dbReference type="CDD" id="cd11064">
    <property type="entry name" value="CYP86A"/>
    <property type="match status" value="1"/>
</dbReference>
<dbReference type="Gene3D" id="1.10.630.10">
    <property type="entry name" value="Cytochrome P450"/>
    <property type="match status" value="1"/>
</dbReference>
<dbReference type="InterPro" id="IPR001128">
    <property type="entry name" value="Cyt_P450"/>
</dbReference>
<dbReference type="InterPro" id="IPR002401">
    <property type="entry name" value="Cyt_P450_E_grp-I"/>
</dbReference>
<dbReference type="InterPro" id="IPR036396">
    <property type="entry name" value="Cyt_P450_sf"/>
</dbReference>
<dbReference type="PANTHER" id="PTHR24296">
    <property type="entry name" value="CYTOCHROME P450"/>
    <property type="match status" value="1"/>
</dbReference>
<dbReference type="Pfam" id="PF00067">
    <property type="entry name" value="p450"/>
    <property type="match status" value="1"/>
</dbReference>
<dbReference type="PRINTS" id="PR00463">
    <property type="entry name" value="EP450I"/>
</dbReference>
<dbReference type="PRINTS" id="PR00385">
    <property type="entry name" value="P450"/>
</dbReference>
<dbReference type="SUPFAM" id="SSF48264">
    <property type="entry name" value="Cytochrome P450"/>
    <property type="match status" value="1"/>
</dbReference>
<accession>Q50EK3</accession>
<proteinExistence type="evidence at transcript level"/>
<comment type="cofactor">
    <cofactor evidence="1">
        <name>heme</name>
        <dbReference type="ChEBI" id="CHEBI:30413"/>
    </cofactor>
</comment>
<comment type="subcellular location">
    <subcellularLocation>
        <location evidence="3">Membrane</location>
        <topology evidence="3">Multi-pass membrane protein</topology>
    </subcellularLocation>
</comment>
<comment type="similarity">
    <text evidence="3">Belongs to the cytochrome P450 family.</text>
</comment>
<protein>
    <recommendedName>
        <fullName>Cytochrome P450 704C1</fullName>
        <ecNumber>1.14.-.-</ecNumber>
    </recommendedName>
    <alternativeName>
        <fullName>Cytochrome P450 CYPD</fullName>
    </alternativeName>
</protein>
<reference key="1">
    <citation type="journal article" date="2005" name="Proc. Natl. Acad. Sci. U.S.A.">
        <title>Loblolly pine abietadienol/abietadienal oxidase PtAO (CYP720B1) is a multifunctional, multisubstrate cytochrome P450 monooxygenase.</title>
        <authorList>
            <person name="Ro D.-K."/>
            <person name="Arimura G."/>
            <person name="Lau S.Y.W."/>
            <person name="Piers E."/>
            <person name="Bohlmann J."/>
        </authorList>
    </citation>
    <scope>NUCLEOTIDE SEQUENCE [MRNA]</scope>
</reference>
<gene>
    <name type="primary">CYP704C1</name>
</gene>